<proteinExistence type="inferred from homology"/>
<gene>
    <name evidence="1" type="primary">prs1</name>
    <name type="ordered locus">SMU_23</name>
</gene>
<name>KPRS1_STRMU</name>
<sequence>MSYSNLKLFALSSNKELAEKVAKTIGISLGKSTVRQFSDGEIQVNIEESIRGNHVFILQSTSSPVNDNLMEILIMVDALKRASAETVSVVMPYYGYARQDRKARSREPITSKLVANMLAVAGVDRLLTVDLHAAQIQGFFDIPVDHLMGAPLIADYFVRRGMCGSDYVVVSPDHGGVTRARKLAQFLQTPIAIIDKRRNVNKMNTSEVMNIIGNVSGKTCILIDDMIDTAGTIAHAADALAEAGATAVYASCTHPVLSGSALDNIQNSAIEKLVVLDTIDLPEEKLIDKIEQISITDLISEAIIRIHEKRPLSPLFEFTTFN</sequence>
<dbReference type="EC" id="2.7.6.1" evidence="1"/>
<dbReference type="EMBL" id="AE014133">
    <property type="protein sequence ID" value="AAN57812.1"/>
    <property type="molecule type" value="Genomic_DNA"/>
</dbReference>
<dbReference type="RefSeq" id="NP_720506.1">
    <property type="nucleotide sequence ID" value="NC_004350.2"/>
</dbReference>
<dbReference type="RefSeq" id="WP_002263139.1">
    <property type="nucleotide sequence ID" value="NC_004350.2"/>
</dbReference>
<dbReference type="SMR" id="Q8DWM2"/>
<dbReference type="STRING" id="210007.SMU_23"/>
<dbReference type="KEGG" id="smu:SMU_23"/>
<dbReference type="PATRIC" id="fig|210007.7.peg.18"/>
<dbReference type="eggNOG" id="COG0462">
    <property type="taxonomic scope" value="Bacteria"/>
</dbReference>
<dbReference type="HOGENOM" id="CLU_033546_4_0_9"/>
<dbReference type="OrthoDB" id="9777067at2"/>
<dbReference type="PhylomeDB" id="Q8DWM2"/>
<dbReference type="UniPathway" id="UPA00087">
    <property type="reaction ID" value="UER00172"/>
</dbReference>
<dbReference type="Proteomes" id="UP000002512">
    <property type="component" value="Chromosome"/>
</dbReference>
<dbReference type="GO" id="GO:0005737">
    <property type="term" value="C:cytoplasm"/>
    <property type="evidence" value="ECO:0007669"/>
    <property type="project" value="UniProtKB-SubCell"/>
</dbReference>
<dbReference type="GO" id="GO:0002189">
    <property type="term" value="C:ribose phosphate diphosphokinase complex"/>
    <property type="evidence" value="ECO:0007669"/>
    <property type="project" value="TreeGrafter"/>
</dbReference>
<dbReference type="GO" id="GO:0005524">
    <property type="term" value="F:ATP binding"/>
    <property type="evidence" value="ECO:0007669"/>
    <property type="project" value="UniProtKB-KW"/>
</dbReference>
<dbReference type="GO" id="GO:0016301">
    <property type="term" value="F:kinase activity"/>
    <property type="evidence" value="ECO:0007669"/>
    <property type="project" value="UniProtKB-KW"/>
</dbReference>
<dbReference type="GO" id="GO:0000287">
    <property type="term" value="F:magnesium ion binding"/>
    <property type="evidence" value="ECO:0007669"/>
    <property type="project" value="UniProtKB-UniRule"/>
</dbReference>
<dbReference type="GO" id="GO:0004749">
    <property type="term" value="F:ribose phosphate diphosphokinase activity"/>
    <property type="evidence" value="ECO:0007669"/>
    <property type="project" value="UniProtKB-UniRule"/>
</dbReference>
<dbReference type="GO" id="GO:0006015">
    <property type="term" value="P:5-phosphoribose 1-diphosphate biosynthetic process"/>
    <property type="evidence" value="ECO:0007669"/>
    <property type="project" value="UniProtKB-UniRule"/>
</dbReference>
<dbReference type="GO" id="GO:0006164">
    <property type="term" value="P:purine nucleotide biosynthetic process"/>
    <property type="evidence" value="ECO:0007669"/>
    <property type="project" value="TreeGrafter"/>
</dbReference>
<dbReference type="GO" id="GO:0009156">
    <property type="term" value="P:ribonucleoside monophosphate biosynthetic process"/>
    <property type="evidence" value="ECO:0007669"/>
    <property type="project" value="InterPro"/>
</dbReference>
<dbReference type="CDD" id="cd06223">
    <property type="entry name" value="PRTases_typeI"/>
    <property type="match status" value="1"/>
</dbReference>
<dbReference type="FunFam" id="3.40.50.2020:FF:000001">
    <property type="entry name" value="Ribose-phosphate pyrophosphokinase"/>
    <property type="match status" value="1"/>
</dbReference>
<dbReference type="Gene3D" id="3.40.50.2020">
    <property type="match status" value="2"/>
</dbReference>
<dbReference type="HAMAP" id="MF_00583_B">
    <property type="entry name" value="RibP_PPkinase_B"/>
    <property type="match status" value="1"/>
</dbReference>
<dbReference type="InterPro" id="IPR000842">
    <property type="entry name" value="PRib_PP_synth_CS"/>
</dbReference>
<dbReference type="InterPro" id="IPR029099">
    <property type="entry name" value="Pribosyltran_N"/>
</dbReference>
<dbReference type="InterPro" id="IPR000836">
    <property type="entry name" value="PRibTrfase_dom"/>
</dbReference>
<dbReference type="InterPro" id="IPR029057">
    <property type="entry name" value="PRTase-like"/>
</dbReference>
<dbReference type="InterPro" id="IPR005946">
    <property type="entry name" value="Rib-P_diPkinase"/>
</dbReference>
<dbReference type="InterPro" id="IPR037515">
    <property type="entry name" value="Rib-P_diPkinase_bac"/>
</dbReference>
<dbReference type="NCBIfam" id="NF002320">
    <property type="entry name" value="PRK01259.1"/>
    <property type="match status" value="1"/>
</dbReference>
<dbReference type="NCBIfam" id="NF002618">
    <property type="entry name" value="PRK02269.1"/>
    <property type="match status" value="1"/>
</dbReference>
<dbReference type="NCBIfam" id="TIGR01251">
    <property type="entry name" value="ribP_PPkin"/>
    <property type="match status" value="1"/>
</dbReference>
<dbReference type="PANTHER" id="PTHR10210">
    <property type="entry name" value="RIBOSE-PHOSPHATE DIPHOSPHOKINASE FAMILY MEMBER"/>
    <property type="match status" value="1"/>
</dbReference>
<dbReference type="PANTHER" id="PTHR10210:SF41">
    <property type="entry name" value="RIBOSE-PHOSPHATE PYROPHOSPHOKINASE 1, CHLOROPLASTIC"/>
    <property type="match status" value="1"/>
</dbReference>
<dbReference type="Pfam" id="PF14572">
    <property type="entry name" value="Pribosyl_synth"/>
    <property type="match status" value="1"/>
</dbReference>
<dbReference type="Pfam" id="PF13793">
    <property type="entry name" value="Pribosyltran_N"/>
    <property type="match status" value="1"/>
</dbReference>
<dbReference type="SMART" id="SM01400">
    <property type="entry name" value="Pribosyltran_N"/>
    <property type="match status" value="1"/>
</dbReference>
<dbReference type="SUPFAM" id="SSF53271">
    <property type="entry name" value="PRTase-like"/>
    <property type="match status" value="1"/>
</dbReference>
<dbReference type="PROSITE" id="PS00114">
    <property type="entry name" value="PRPP_SYNTHASE"/>
    <property type="match status" value="1"/>
</dbReference>
<reference key="1">
    <citation type="journal article" date="2002" name="Proc. Natl. Acad. Sci. U.S.A.">
        <title>Genome sequence of Streptococcus mutans UA159, a cariogenic dental pathogen.</title>
        <authorList>
            <person name="Ajdic D.J."/>
            <person name="McShan W.M."/>
            <person name="McLaughlin R.E."/>
            <person name="Savic G."/>
            <person name="Chang J."/>
            <person name="Carson M.B."/>
            <person name="Primeaux C."/>
            <person name="Tian R."/>
            <person name="Kenton S."/>
            <person name="Jia H.G."/>
            <person name="Lin S.P."/>
            <person name="Qian Y."/>
            <person name="Li S."/>
            <person name="Zhu H."/>
            <person name="Najar F.Z."/>
            <person name="Lai H."/>
            <person name="White J."/>
            <person name="Roe B.A."/>
            <person name="Ferretti J.J."/>
        </authorList>
    </citation>
    <scope>NUCLEOTIDE SEQUENCE [LARGE SCALE GENOMIC DNA]</scope>
    <source>
        <strain>ATCC 700610 / UA159</strain>
    </source>
</reference>
<protein>
    <recommendedName>
        <fullName evidence="1">Ribose-phosphate pyrophosphokinase 1</fullName>
        <shortName evidence="1">RPPK 1</shortName>
        <ecNumber evidence="1">2.7.6.1</ecNumber>
    </recommendedName>
    <alternativeName>
        <fullName evidence="1">5-phospho-D-ribosyl alpha-1-diphosphate synthase 1</fullName>
    </alternativeName>
    <alternativeName>
        <fullName evidence="1">Phosphoribosyl diphosphate synthase 1</fullName>
    </alternativeName>
    <alternativeName>
        <fullName evidence="1">Phosphoribosyl pyrophosphate synthase 1</fullName>
        <shortName evidence="1">P-Rib-PP synthase 1</shortName>
        <shortName evidence="1">PRPP synthase 1</shortName>
        <shortName evidence="1">PRPPase 1</shortName>
    </alternativeName>
</protein>
<organism>
    <name type="scientific">Streptococcus mutans serotype c (strain ATCC 700610 / UA159)</name>
    <dbReference type="NCBI Taxonomy" id="210007"/>
    <lineage>
        <taxon>Bacteria</taxon>
        <taxon>Bacillati</taxon>
        <taxon>Bacillota</taxon>
        <taxon>Bacilli</taxon>
        <taxon>Lactobacillales</taxon>
        <taxon>Streptococcaceae</taxon>
        <taxon>Streptococcus</taxon>
    </lineage>
</organism>
<keyword id="KW-0067">ATP-binding</keyword>
<keyword id="KW-0963">Cytoplasm</keyword>
<keyword id="KW-0418">Kinase</keyword>
<keyword id="KW-0460">Magnesium</keyword>
<keyword id="KW-0479">Metal-binding</keyword>
<keyword id="KW-0545">Nucleotide biosynthesis</keyword>
<keyword id="KW-0547">Nucleotide-binding</keyword>
<keyword id="KW-1185">Reference proteome</keyword>
<keyword id="KW-0808">Transferase</keyword>
<evidence type="ECO:0000255" key="1">
    <source>
        <dbReference type="HAMAP-Rule" id="MF_00583"/>
    </source>
</evidence>
<comment type="function">
    <text evidence="1">Involved in the biosynthesis of the central metabolite phospho-alpha-D-ribosyl-1-pyrophosphate (PRPP) via the transfer of pyrophosphoryl group from ATP to 1-hydroxyl of ribose-5-phosphate (Rib-5-P).</text>
</comment>
<comment type="catalytic activity">
    <reaction evidence="1">
        <text>D-ribose 5-phosphate + ATP = 5-phospho-alpha-D-ribose 1-diphosphate + AMP + H(+)</text>
        <dbReference type="Rhea" id="RHEA:15609"/>
        <dbReference type="ChEBI" id="CHEBI:15378"/>
        <dbReference type="ChEBI" id="CHEBI:30616"/>
        <dbReference type="ChEBI" id="CHEBI:58017"/>
        <dbReference type="ChEBI" id="CHEBI:78346"/>
        <dbReference type="ChEBI" id="CHEBI:456215"/>
        <dbReference type="EC" id="2.7.6.1"/>
    </reaction>
</comment>
<comment type="cofactor">
    <cofactor evidence="1">
        <name>Mg(2+)</name>
        <dbReference type="ChEBI" id="CHEBI:18420"/>
    </cofactor>
    <text evidence="1">Binds 2 Mg(2+) ions per subunit.</text>
</comment>
<comment type="pathway">
    <text evidence="1">Metabolic intermediate biosynthesis; 5-phospho-alpha-D-ribose 1-diphosphate biosynthesis; 5-phospho-alpha-D-ribose 1-diphosphate from D-ribose 5-phosphate (route I): step 1/1.</text>
</comment>
<comment type="subunit">
    <text evidence="1">Homohexamer.</text>
</comment>
<comment type="subcellular location">
    <subcellularLocation>
        <location evidence="1">Cytoplasm</location>
    </subcellularLocation>
</comment>
<comment type="similarity">
    <text evidence="1">Belongs to the ribose-phosphate pyrophosphokinase family. Class I subfamily.</text>
</comment>
<accession>Q8DWM2</accession>
<feature type="chain" id="PRO_0000141202" description="Ribose-phosphate pyrophosphokinase 1">
    <location>
        <begin position="1"/>
        <end position="322"/>
    </location>
</feature>
<feature type="active site" evidence="1">
    <location>
        <position position="196"/>
    </location>
</feature>
<feature type="binding site" evidence="1">
    <location>
        <begin position="39"/>
        <end position="41"/>
    </location>
    <ligand>
        <name>ATP</name>
        <dbReference type="ChEBI" id="CHEBI:30616"/>
    </ligand>
</feature>
<feature type="binding site" evidence="1">
    <location>
        <begin position="98"/>
        <end position="99"/>
    </location>
    <ligand>
        <name>ATP</name>
        <dbReference type="ChEBI" id="CHEBI:30616"/>
    </ligand>
</feature>
<feature type="binding site" evidence="1">
    <location>
        <position position="132"/>
    </location>
    <ligand>
        <name>Mg(2+)</name>
        <dbReference type="ChEBI" id="CHEBI:18420"/>
        <label>1</label>
    </ligand>
</feature>
<feature type="binding site" evidence="1">
    <location>
        <position position="173"/>
    </location>
    <ligand>
        <name>Mg(2+)</name>
        <dbReference type="ChEBI" id="CHEBI:18420"/>
        <label>2</label>
    </ligand>
</feature>
<feature type="binding site" evidence="1">
    <location>
        <position position="198"/>
    </location>
    <ligand>
        <name>D-ribose 5-phosphate</name>
        <dbReference type="ChEBI" id="CHEBI:78346"/>
    </ligand>
</feature>
<feature type="binding site" evidence="1">
    <location>
        <position position="224"/>
    </location>
    <ligand>
        <name>D-ribose 5-phosphate</name>
        <dbReference type="ChEBI" id="CHEBI:78346"/>
    </ligand>
</feature>
<feature type="binding site" evidence="1">
    <location>
        <begin position="228"/>
        <end position="232"/>
    </location>
    <ligand>
        <name>D-ribose 5-phosphate</name>
        <dbReference type="ChEBI" id="CHEBI:78346"/>
    </ligand>
</feature>